<protein>
    <recommendedName>
        <fullName>U3-theraphotoxin-Hhn1g</fullName>
        <shortName>U3-TRTX-Hhn1g</shortName>
    </recommendedName>
    <alternativeName>
        <fullName>Hainantoxin-VIII-15</fullName>
        <shortName>HNTX-VIII-15</shortName>
    </alternativeName>
</protein>
<organism>
    <name type="scientific">Cyriopagopus hainanus</name>
    <name type="common">Chinese bird spider</name>
    <name type="synonym">Haplopelma hainanum</name>
    <dbReference type="NCBI Taxonomy" id="209901"/>
    <lineage>
        <taxon>Eukaryota</taxon>
        <taxon>Metazoa</taxon>
        <taxon>Ecdysozoa</taxon>
        <taxon>Arthropoda</taxon>
        <taxon>Chelicerata</taxon>
        <taxon>Arachnida</taxon>
        <taxon>Araneae</taxon>
        <taxon>Mygalomorphae</taxon>
        <taxon>Theraphosidae</taxon>
        <taxon>Haplopelma</taxon>
    </lineage>
</organism>
<accession>D2Y2N5</accession>
<comment type="function">
    <text evidence="1">Ion channel inhibitor.</text>
</comment>
<comment type="subcellular location">
    <subcellularLocation>
        <location evidence="1">Secreted</location>
    </subcellularLocation>
</comment>
<comment type="tissue specificity">
    <text>Expressed by the venom gland.</text>
</comment>
<comment type="domain">
    <text evidence="1">The presence of a 'disulfide through disulfide knot' structurally defines this protein as a knottin.</text>
</comment>
<comment type="similarity">
    <text evidence="4">Belongs to the neurotoxin 10 (Hwtx-1) family. 51 (Hntx-8) subfamily. Hntx-8 sub-subfamily.</text>
</comment>
<evidence type="ECO:0000250" key="1"/>
<evidence type="ECO:0000250" key="2">
    <source>
        <dbReference type="UniProtKB" id="B3FIS6"/>
    </source>
</evidence>
<evidence type="ECO:0000255" key="3"/>
<evidence type="ECO:0000305" key="4"/>
<proteinExistence type="inferred from homology"/>
<dbReference type="EMBL" id="GU293112">
    <property type="protein sequence ID" value="ADB56928.1"/>
    <property type="molecule type" value="Genomic_DNA"/>
</dbReference>
<dbReference type="ArachnoServer" id="AS001870">
    <property type="toxin name" value="U3-theraphotoxin-Hhn1g"/>
</dbReference>
<dbReference type="GO" id="GO:0005576">
    <property type="term" value="C:extracellular region"/>
    <property type="evidence" value="ECO:0007669"/>
    <property type="project" value="UniProtKB-SubCell"/>
</dbReference>
<dbReference type="GO" id="GO:0008200">
    <property type="term" value="F:ion channel inhibitor activity"/>
    <property type="evidence" value="ECO:0007669"/>
    <property type="project" value="InterPro"/>
</dbReference>
<dbReference type="GO" id="GO:0090729">
    <property type="term" value="F:toxin activity"/>
    <property type="evidence" value="ECO:0007669"/>
    <property type="project" value="UniProtKB-KW"/>
</dbReference>
<dbReference type="InterPro" id="IPR011696">
    <property type="entry name" value="Huwentoxin-1"/>
</dbReference>
<dbReference type="Pfam" id="PF07740">
    <property type="entry name" value="Toxin_12"/>
    <property type="match status" value="1"/>
</dbReference>
<dbReference type="SUPFAM" id="SSF57059">
    <property type="entry name" value="omega toxin-like"/>
    <property type="match status" value="1"/>
</dbReference>
<name>H8O01_CYRHA</name>
<feature type="signal peptide" evidence="3">
    <location>
        <begin position="1"/>
        <end position="24"/>
    </location>
</feature>
<feature type="propeptide" id="PRO_0000400643" evidence="1">
    <location>
        <begin position="25"/>
        <end position="52"/>
    </location>
</feature>
<feature type="peptide" id="PRO_0000400644" description="U3-theraphotoxin-Hhn1g">
    <location>
        <begin position="53"/>
        <end position="87"/>
    </location>
</feature>
<feature type="disulfide bond" evidence="2">
    <location>
        <begin position="54"/>
        <end position="67"/>
    </location>
</feature>
<feature type="disulfide bond" evidence="2">
    <location>
        <begin position="61"/>
        <end position="72"/>
    </location>
</feature>
<feature type="disulfide bond" evidence="2">
    <location>
        <begin position="66"/>
        <end position="79"/>
    </location>
</feature>
<keyword id="KW-1015">Disulfide bond</keyword>
<keyword id="KW-0872">Ion channel impairing toxin</keyword>
<keyword id="KW-0960">Knottin</keyword>
<keyword id="KW-0964">Secreted</keyword>
<keyword id="KW-0732">Signal</keyword>
<keyword id="KW-0800">Toxin</keyword>
<sequence>MVNMKASMFLTFAGLVLLFVVCFASESEEKEFPKEMLSSIFAVDNDFKQEERDCAGYMRECKEKLCCSGYVCSSRWKRCVLPAPWRR</sequence>
<reference key="1">
    <citation type="journal article" date="2010" name="J. Proteome Res.">
        <title>Molecular diversification of peptide toxins from the tarantula Haplopelma hainanum (Ornithoctonus hainana) venom based on transcriptomic, peptidomic, and genomic analyses.</title>
        <authorList>
            <person name="Tang X."/>
            <person name="Zhang Y."/>
            <person name="Hu W."/>
            <person name="Xu D."/>
            <person name="Tao H."/>
            <person name="Yang X."/>
            <person name="Li Y."/>
            <person name="Jiang L."/>
            <person name="Liang S."/>
        </authorList>
    </citation>
    <scope>NUCLEOTIDE SEQUENCE [LARGE SCALE GENOMIC DNA]</scope>
    <source>
        <tissue>Venom gland</tissue>
    </source>
</reference>